<proteinExistence type="inferred from homology"/>
<keyword id="KW-0997">Cell inner membrane</keyword>
<keyword id="KW-1003">Cell membrane</keyword>
<keyword id="KW-0378">Hydrolase</keyword>
<keyword id="KW-0441">Lipid A biosynthesis</keyword>
<keyword id="KW-0444">Lipid biosynthesis</keyword>
<keyword id="KW-0443">Lipid metabolism</keyword>
<keyword id="KW-0464">Manganese</keyword>
<keyword id="KW-0472">Membrane</keyword>
<keyword id="KW-0479">Metal-binding</keyword>
<organism>
    <name type="scientific">Escherichia coli (strain SMS-3-5 / SECEC)</name>
    <dbReference type="NCBI Taxonomy" id="439855"/>
    <lineage>
        <taxon>Bacteria</taxon>
        <taxon>Pseudomonadati</taxon>
        <taxon>Pseudomonadota</taxon>
        <taxon>Gammaproteobacteria</taxon>
        <taxon>Enterobacterales</taxon>
        <taxon>Enterobacteriaceae</taxon>
        <taxon>Escherichia</taxon>
    </lineage>
</organism>
<comment type="function">
    <text evidence="1">Hydrolyzes the pyrophosphate bond of UDP-2,3-diacylglucosamine to yield 2,3-diacylglucosamine 1-phosphate (lipid X) and UMP by catalyzing the attack of water at the alpha-P atom. Involved in the biosynthesis of lipid A, a phosphorylated glycolipid that anchors the lipopolysaccharide to the outer membrane of the cell.</text>
</comment>
<comment type="catalytic activity">
    <reaction evidence="1">
        <text>UDP-2-N,3-O-bis[(3R)-3-hydroxytetradecanoyl]-alpha-D-glucosamine + H2O = 2-N,3-O-bis[(3R)-3-hydroxytetradecanoyl]-alpha-D-glucosaminyl 1-phosphate + UMP + 2 H(+)</text>
        <dbReference type="Rhea" id="RHEA:25213"/>
        <dbReference type="ChEBI" id="CHEBI:15377"/>
        <dbReference type="ChEBI" id="CHEBI:15378"/>
        <dbReference type="ChEBI" id="CHEBI:57865"/>
        <dbReference type="ChEBI" id="CHEBI:57957"/>
        <dbReference type="ChEBI" id="CHEBI:78847"/>
        <dbReference type="EC" id="3.6.1.54"/>
    </reaction>
</comment>
<comment type="cofactor">
    <cofactor evidence="1">
        <name>Mn(2+)</name>
        <dbReference type="ChEBI" id="CHEBI:29035"/>
    </cofactor>
    <text evidence="1">Binds 2 Mn(2+) ions per subunit in a binuclear metal center.</text>
</comment>
<comment type="pathway">
    <text evidence="1">Glycolipid biosynthesis; lipid IV(A) biosynthesis; lipid IV(A) from (3R)-3-hydroxytetradecanoyl-[acyl-carrier-protein] and UDP-N-acetyl-alpha-D-glucosamine: step 4/6.</text>
</comment>
<comment type="subcellular location">
    <subcellularLocation>
        <location evidence="1">Cell inner membrane</location>
        <topology evidence="1">Peripheral membrane protein</topology>
        <orientation evidence="1">Cytoplasmic side</orientation>
    </subcellularLocation>
</comment>
<comment type="similarity">
    <text evidence="1">Belongs to the LpxH family.</text>
</comment>
<evidence type="ECO:0000255" key="1">
    <source>
        <dbReference type="HAMAP-Rule" id="MF_00575"/>
    </source>
</evidence>
<sequence length="240" mass="26894">MATLFIADLHLCVEEPAITAGFLRFLAGEARKADALYILGDLFEAWIGDDDPNPLHRQMAAAIKAVSDSGVPCYFIHGNRDFLLGKRFARESGMTLLPEEKVLELYGRRVLIMHGDTLCTDDAGYQAFRAKVHKPWLQTLFLALPLFVRKRIAARMRANSKEANSSKSLAIMDVNQNAVVSAMEKHQVQWLIHGHTHRPAVHELIANQQPAFRVVLGAWHTEGSMVKVTADDVELIHFPF</sequence>
<dbReference type="EC" id="3.6.1.54" evidence="1"/>
<dbReference type="EMBL" id="CP000970">
    <property type="protein sequence ID" value="ACB17987.1"/>
    <property type="molecule type" value="Genomic_DNA"/>
</dbReference>
<dbReference type="RefSeq" id="WP_000212253.1">
    <property type="nucleotide sequence ID" value="NC_010498.1"/>
</dbReference>
<dbReference type="SMR" id="B1LKE3"/>
<dbReference type="KEGG" id="ecm:EcSMS35_0569"/>
<dbReference type="HOGENOM" id="CLU_074586_0_0_6"/>
<dbReference type="UniPathway" id="UPA00359">
    <property type="reaction ID" value="UER00480"/>
</dbReference>
<dbReference type="Proteomes" id="UP000007011">
    <property type="component" value="Chromosome"/>
</dbReference>
<dbReference type="GO" id="GO:0005737">
    <property type="term" value="C:cytoplasm"/>
    <property type="evidence" value="ECO:0007669"/>
    <property type="project" value="InterPro"/>
</dbReference>
<dbReference type="GO" id="GO:0019897">
    <property type="term" value="C:extrinsic component of plasma membrane"/>
    <property type="evidence" value="ECO:0007669"/>
    <property type="project" value="UniProtKB-UniRule"/>
</dbReference>
<dbReference type="GO" id="GO:0030145">
    <property type="term" value="F:manganese ion binding"/>
    <property type="evidence" value="ECO:0007669"/>
    <property type="project" value="UniProtKB-UniRule"/>
</dbReference>
<dbReference type="GO" id="GO:0008758">
    <property type="term" value="F:UDP-2,3-diacylglucosamine hydrolase activity"/>
    <property type="evidence" value="ECO:0007669"/>
    <property type="project" value="UniProtKB-UniRule"/>
</dbReference>
<dbReference type="GO" id="GO:0009245">
    <property type="term" value="P:lipid A biosynthetic process"/>
    <property type="evidence" value="ECO:0007669"/>
    <property type="project" value="UniProtKB-UniRule"/>
</dbReference>
<dbReference type="CDD" id="cd07398">
    <property type="entry name" value="MPP_YbbF-LpxH"/>
    <property type="match status" value="1"/>
</dbReference>
<dbReference type="FunFam" id="3.60.21.10:FF:000012">
    <property type="entry name" value="UDP-2,3-diacylglucosamine hydrolase"/>
    <property type="match status" value="1"/>
</dbReference>
<dbReference type="Gene3D" id="3.60.21.10">
    <property type="match status" value="1"/>
</dbReference>
<dbReference type="HAMAP" id="MF_00575">
    <property type="entry name" value="LpxH"/>
    <property type="match status" value="1"/>
</dbReference>
<dbReference type="InterPro" id="IPR004843">
    <property type="entry name" value="Calcineurin-like_PHP_ApaH"/>
</dbReference>
<dbReference type="InterPro" id="IPR043461">
    <property type="entry name" value="LpxH-like"/>
</dbReference>
<dbReference type="InterPro" id="IPR029052">
    <property type="entry name" value="Metallo-depent_PP-like"/>
</dbReference>
<dbReference type="InterPro" id="IPR010138">
    <property type="entry name" value="UDP-diacylglucosamine_Hdrlase"/>
</dbReference>
<dbReference type="NCBIfam" id="TIGR01854">
    <property type="entry name" value="lipid_A_lpxH"/>
    <property type="match status" value="1"/>
</dbReference>
<dbReference type="NCBIfam" id="NF003743">
    <property type="entry name" value="PRK05340.1"/>
    <property type="match status" value="1"/>
</dbReference>
<dbReference type="PANTHER" id="PTHR34990:SF1">
    <property type="entry name" value="UDP-2,3-DIACYLGLUCOSAMINE HYDROLASE"/>
    <property type="match status" value="1"/>
</dbReference>
<dbReference type="PANTHER" id="PTHR34990">
    <property type="entry name" value="UDP-2,3-DIACYLGLUCOSAMINE HYDROLASE-RELATED"/>
    <property type="match status" value="1"/>
</dbReference>
<dbReference type="Pfam" id="PF00149">
    <property type="entry name" value="Metallophos"/>
    <property type="match status" value="1"/>
</dbReference>
<dbReference type="SUPFAM" id="SSF56300">
    <property type="entry name" value="Metallo-dependent phosphatases"/>
    <property type="match status" value="1"/>
</dbReference>
<reference key="1">
    <citation type="journal article" date="2008" name="J. Bacteriol.">
        <title>Insights into the environmental resistance gene pool from the genome sequence of the multidrug-resistant environmental isolate Escherichia coli SMS-3-5.</title>
        <authorList>
            <person name="Fricke W.F."/>
            <person name="Wright M.S."/>
            <person name="Lindell A.H."/>
            <person name="Harkins D.M."/>
            <person name="Baker-Austin C."/>
            <person name="Ravel J."/>
            <person name="Stepanauskas R."/>
        </authorList>
    </citation>
    <scope>NUCLEOTIDE SEQUENCE [LARGE SCALE GENOMIC DNA]</scope>
    <source>
        <strain>SMS-3-5 / SECEC</strain>
    </source>
</reference>
<protein>
    <recommendedName>
        <fullName evidence="1">UDP-2,3-diacylglucosamine hydrolase</fullName>
        <ecNumber evidence="1">3.6.1.54</ecNumber>
    </recommendedName>
    <alternativeName>
        <fullName evidence="1">UDP-2,3-diacylglucosamine diphosphatase</fullName>
    </alternativeName>
</protein>
<gene>
    <name evidence="1" type="primary">lpxH</name>
    <name type="ordered locus">EcSMS35_0569</name>
</gene>
<feature type="chain" id="PRO_1000129524" description="UDP-2,3-diacylglucosamine hydrolase">
    <location>
        <begin position="1"/>
        <end position="240"/>
    </location>
</feature>
<feature type="binding site" evidence="1">
    <location>
        <position position="8"/>
    </location>
    <ligand>
        <name>Mn(2+)</name>
        <dbReference type="ChEBI" id="CHEBI:29035"/>
        <label>1</label>
    </ligand>
</feature>
<feature type="binding site" evidence="1">
    <location>
        <position position="10"/>
    </location>
    <ligand>
        <name>Mn(2+)</name>
        <dbReference type="ChEBI" id="CHEBI:29035"/>
        <label>1</label>
    </ligand>
</feature>
<feature type="binding site" evidence="1">
    <location>
        <position position="41"/>
    </location>
    <ligand>
        <name>Mn(2+)</name>
        <dbReference type="ChEBI" id="CHEBI:29035"/>
        <label>1</label>
    </ligand>
</feature>
<feature type="binding site" evidence="1">
    <location>
        <position position="41"/>
    </location>
    <ligand>
        <name>Mn(2+)</name>
        <dbReference type="ChEBI" id="CHEBI:29035"/>
        <label>2</label>
    </ligand>
</feature>
<feature type="binding site" evidence="1">
    <location>
        <begin position="79"/>
        <end position="80"/>
    </location>
    <ligand>
        <name>substrate</name>
    </ligand>
</feature>
<feature type="binding site" evidence="1">
    <location>
        <position position="79"/>
    </location>
    <ligand>
        <name>Mn(2+)</name>
        <dbReference type="ChEBI" id="CHEBI:29035"/>
        <label>2</label>
    </ligand>
</feature>
<feature type="binding site" evidence="1">
    <location>
        <position position="114"/>
    </location>
    <ligand>
        <name>Mn(2+)</name>
        <dbReference type="ChEBI" id="CHEBI:29035"/>
        <label>2</label>
    </ligand>
</feature>
<feature type="binding site" evidence="1">
    <location>
        <position position="122"/>
    </location>
    <ligand>
        <name>substrate</name>
    </ligand>
</feature>
<feature type="binding site" evidence="1">
    <location>
        <position position="160"/>
    </location>
    <ligand>
        <name>substrate</name>
    </ligand>
</feature>
<feature type="binding site" evidence="1">
    <location>
        <position position="164"/>
    </location>
    <ligand>
        <name>substrate</name>
    </ligand>
</feature>
<feature type="binding site" evidence="1">
    <location>
        <position position="167"/>
    </location>
    <ligand>
        <name>substrate</name>
    </ligand>
</feature>
<feature type="binding site" evidence="1">
    <location>
        <position position="195"/>
    </location>
    <ligand>
        <name>Mn(2+)</name>
        <dbReference type="ChEBI" id="CHEBI:29035"/>
        <label>2</label>
    </ligand>
</feature>
<feature type="binding site" evidence="1">
    <location>
        <position position="195"/>
    </location>
    <ligand>
        <name>substrate</name>
    </ligand>
</feature>
<feature type="binding site" evidence="1">
    <location>
        <position position="197"/>
    </location>
    <ligand>
        <name>Mn(2+)</name>
        <dbReference type="ChEBI" id="CHEBI:29035"/>
        <label>1</label>
    </ligand>
</feature>
<accession>B1LKE3</accession>
<name>LPXH_ECOSM</name>